<accession>C3LRQ3</accession>
<protein>
    <recommendedName>
        <fullName evidence="1">Large ribosomal subunit protein uL22</fullName>
    </recommendedName>
    <alternativeName>
        <fullName evidence="2">50S ribosomal protein L22</fullName>
    </alternativeName>
</protein>
<name>RL22_VIBCM</name>
<comment type="function">
    <text evidence="1">This protein binds specifically to 23S rRNA; its binding is stimulated by other ribosomal proteins, e.g. L4, L17, and L20. It is important during the early stages of 50S assembly. It makes multiple contacts with different domains of the 23S rRNA in the assembled 50S subunit and ribosome (By similarity).</text>
</comment>
<comment type="function">
    <text evidence="1">The globular domain of the protein is located near the polypeptide exit tunnel on the outside of the subunit, while an extended beta-hairpin is found that lines the wall of the exit tunnel in the center of the 70S ribosome.</text>
</comment>
<comment type="subunit">
    <text evidence="1">Part of the 50S ribosomal subunit.</text>
</comment>
<comment type="similarity">
    <text evidence="1">Belongs to the universal ribosomal protein uL22 family.</text>
</comment>
<dbReference type="EMBL" id="CP001233">
    <property type="protein sequence ID" value="ACP06808.1"/>
    <property type="molecule type" value="Genomic_DNA"/>
</dbReference>
<dbReference type="RefSeq" id="WP_000387269.1">
    <property type="nucleotide sequence ID" value="NC_012578.1"/>
</dbReference>
<dbReference type="SMR" id="C3LRQ3"/>
<dbReference type="GeneID" id="94012757"/>
<dbReference type="KEGG" id="vcm:VCM66_2511"/>
<dbReference type="HOGENOM" id="CLU_083987_3_3_6"/>
<dbReference type="Proteomes" id="UP000001217">
    <property type="component" value="Chromosome I"/>
</dbReference>
<dbReference type="GO" id="GO:0022625">
    <property type="term" value="C:cytosolic large ribosomal subunit"/>
    <property type="evidence" value="ECO:0007669"/>
    <property type="project" value="TreeGrafter"/>
</dbReference>
<dbReference type="GO" id="GO:0019843">
    <property type="term" value="F:rRNA binding"/>
    <property type="evidence" value="ECO:0007669"/>
    <property type="project" value="UniProtKB-UniRule"/>
</dbReference>
<dbReference type="GO" id="GO:0003735">
    <property type="term" value="F:structural constituent of ribosome"/>
    <property type="evidence" value="ECO:0007669"/>
    <property type="project" value="InterPro"/>
</dbReference>
<dbReference type="GO" id="GO:0006412">
    <property type="term" value="P:translation"/>
    <property type="evidence" value="ECO:0007669"/>
    <property type="project" value="UniProtKB-UniRule"/>
</dbReference>
<dbReference type="CDD" id="cd00336">
    <property type="entry name" value="Ribosomal_L22"/>
    <property type="match status" value="1"/>
</dbReference>
<dbReference type="FunFam" id="3.90.470.10:FF:000001">
    <property type="entry name" value="50S ribosomal protein L22"/>
    <property type="match status" value="1"/>
</dbReference>
<dbReference type="Gene3D" id="3.90.470.10">
    <property type="entry name" value="Ribosomal protein L22/L17"/>
    <property type="match status" value="1"/>
</dbReference>
<dbReference type="HAMAP" id="MF_01331_B">
    <property type="entry name" value="Ribosomal_uL22_B"/>
    <property type="match status" value="1"/>
</dbReference>
<dbReference type="InterPro" id="IPR001063">
    <property type="entry name" value="Ribosomal_uL22"/>
</dbReference>
<dbReference type="InterPro" id="IPR005727">
    <property type="entry name" value="Ribosomal_uL22_bac/chlpt-type"/>
</dbReference>
<dbReference type="InterPro" id="IPR047867">
    <property type="entry name" value="Ribosomal_uL22_bac/org-type"/>
</dbReference>
<dbReference type="InterPro" id="IPR018260">
    <property type="entry name" value="Ribosomal_uL22_CS"/>
</dbReference>
<dbReference type="InterPro" id="IPR036394">
    <property type="entry name" value="Ribosomal_uL22_sf"/>
</dbReference>
<dbReference type="NCBIfam" id="TIGR01044">
    <property type="entry name" value="rplV_bact"/>
    <property type="match status" value="1"/>
</dbReference>
<dbReference type="PANTHER" id="PTHR13501">
    <property type="entry name" value="CHLOROPLAST 50S RIBOSOMAL PROTEIN L22-RELATED"/>
    <property type="match status" value="1"/>
</dbReference>
<dbReference type="PANTHER" id="PTHR13501:SF8">
    <property type="entry name" value="LARGE RIBOSOMAL SUBUNIT PROTEIN UL22M"/>
    <property type="match status" value="1"/>
</dbReference>
<dbReference type="Pfam" id="PF00237">
    <property type="entry name" value="Ribosomal_L22"/>
    <property type="match status" value="1"/>
</dbReference>
<dbReference type="SUPFAM" id="SSF54843">
    <property type="entry name" value="Ribosomal protein L22"/>
    <property type="match status" value="1"/>
</dbReference>
<dbReference type="PROSITE" id="PS00464">
    <property type="entry name" value="RIBOSOMAL_L22"/>
    <property type="match status" value="1"/>
</dbReference>
<proteinExistence type="inferred from homology"/>
<gene>
    <name evidence="1" type="primary">rplV</name>
    <name type="ordered locus">VCM66_2511</name>
</gene>
<keyword id="KW-0687">Ribonucleoprotein</keyword>
<keyword id="KW-0689">Ribosomal protein</keyword>
<keyword id="KW-0694">RNA-binding</keyword>
<keyword id="KW-0699">rRNA-binding</keyword>
<feature type="chain" id="PRO_1000166093" description="Large ribosomal subunit protein uL22">
    <location>
        <begin position="1"/>
        <end position="110"/>
    </location>
</feature>
<evidence type="ECO:0000255" key="1">
    <source>
        <dbReference type="HAMAP-Rule" id="MF_01331"/>
    </source>
</evidence>
<evidence type="ECO:0000305" key="2"/>
<organism>
    <name type="scientific">Vibrio cholerae serotype O1 (strain M66-2)</name>
    <dbReference type="NCBI Taxonomy" id="579112"/>
    <lineage>
        <taxon>Bacteria</taxon>
        <taxon>Pseudomonadati</taxon>
        <taxon>Pseudomonadota</taxon>
        <taxon>Gammaproteobacteria</taxon>
        <taxon>Vibrionales</taxon>
        <taxon>Vibrionaceae</taxon>
        <taxon>Vibrio</taxon>
    </lineage>
</organism>
<reference key="1">
    <citation type="journal article" date="2008" name="PLoS ONE">
        <title>A recalibrated molecular clock and independent origins for the cholera pandemic clones.</title>
        <authorList>
            <person name="Feng L."/>
            <person name="Reeves P.R."/>
            <person name="Lan R."/>
            <person name="Ren Y."/>
            <person name="Gao C."/>
            <person name="Zhou Z."/>
            <person name="Ren Y."/>
            <person name="Cheng J."/>
            <person name="Wang W."/>
            <person name="Wang J."/>
            <person name="Qian W."/>
            <person name="Li D."/>
            <person name="Wang L."/>
        </authorList>
    </citation>
    <scope>NUCLEOTIDE SEQUENCE [LARGE SCALE GENOMIC DNA]</scope>
    <source>
        <strain>M66-2</strain>
    </source>
</reference>
<sequence length="110" mass="12198">MEAIAKHNFARISPQKARLVADQIRGKSVDQALELLTFSNKKAAELVKKVLESAIANAEHNEGADIDDLRVAKIFVDEGPVMKRIMPRAKGRADRILKRSSHITVVVADR</sequence>